<reference key="1">
    <citation type="journal article" date="2002" name="Nature">
        <title>Sequence and analysis of rice chromosome 4.</title>
        <authorList>
            <person name="Feng Q."/>
            <person name="Zhang Y."/>
            <person name="Hao P."/>
            <person name="Wang S."/>
            <person name="Fu G."/>
            <person name="Huang Y."/>
            <person name="Li Y."/>
            <person name="Zhu J."/>
            <person name="Liu Y."/>
            <person name="Hu X."/>
            <person name="Jia P."/>
            <person name="Zhang Y."/>
            <person name="Zhao Q."/>
            <person name="Ying K."/>
            <person name="Yu S."/>
            <person name="Tang Y."/>
            <person name="Weng Q."/>
            <person name="Zhang L."/>
            <person name="Lu Y."/>
            <person name="Mu J."/>
            <person name="Lu Y."/>
            <person name="Zhang L.S."/>
            <person name="Yu Z."/>
            <person name="Fan D."/>
            <person name="Liu X."/>
            <person name="Lu T."/>
            <person name="Li C."/>
            <person name="Wu Y."/>
            <person name="Sun T."/>
            <person name="Lei H."/>
            <person name="Li T."/>
            <person name="Hu H."/>
            <person name="Guan J."/>
            <person name="Wu M."/>
            <person name="Zhang R."/>
            <person name="Zhou B."/>
            <person name="Chen Z."/>
            <person name="Chen L."/>
            <person name="Jin Z."/>
            <person name="Wang R."/>
            <person name="Yin H."/>
            <person name="Cai Z."/>
            <person name="Ren S."/>
            <person name="Lv G."/>
            <person name="Gu W."/>
            <person name="Zhu G."/>
            <person name="Tu Y."/>
            <person name="Jia J."/>
            <person name="Zhang Y."/>
            <person name="Chen J."/>
            <person name="Kang H."/>
            <person name="Chen X."/>
            <person name="Shao C."/>
            <person name="Sun Y."/>
            <person name="Hu Q."/>
            <person name="Zhang X."/>
            <person name="Zhang W."/>
            <person name="Wang L."/>
            <person name="Ding C."/>
            <person name="Sheng H."/>
            <person name="Gu J."/>
            <person name="Chen S."/>
            <person name="Ni L."/>
            <person name="Zhu F."/>
            <person name="Chen W."/>
            <person name="Lan L."/>
            <person name="Lai Y."/>
            <person name="Cheng Z."/>
            <person name="Gu M."/>
            <person name="Jiang J."/>
            <person name="Li J."/>
            <person name="Hong G."/>
            <person name="Xue Y."/>
            <person name="Han B."/>
        </authorList>
    </citation>
    <scope>NUCLEOTIDE SEQUENCE [LARGE SCALE GENOMIC DNA]</scope>
    <source>
        <strain>cv. Nipponbare</strain>
    </source>
</reference>
<reference key="2">
    <citation type="journal article" date="2005" name="Nature">
        <title>The map-based sequence of the rice genome.</title>
        <authorList>
            <consortium name="International rice genome sequencing project (IRGSP)"/>
        </authorList>
    </citation>
    <scope>NUCLEOTIDE SEQUENCE [LARGE SCALE GENOMIC DNA]</scope>
    <source>
        <strain>cv. Nipponbare</strain>
    </source>
</reference>
<reference key="3">
    <citation type="journal article" date="2008" name="Nucleic Acids Res.">
        <title>The rice annotation project database (RAP-DB): 2008 update.</title>
        <authorList>
            <consortium name="The rice annotation project (RAP)"/>
        </authorList>
    </citation>
    <scope>GENOME REANNOTATION</scope>
    <source>
        <strain>cv. Nipponbare</strain>
    </source>
</reference>
<reference key="4">
    <citation type="journal article" date="2013" name="Rice">
        <title>Improvement of the Oryza sativa Nipponbare reference genome using next generation sequence and optical map data.</title>
        <authorList>
            <person name="Kawahara Y."/>
            <person name="de la Bastide M."/>
            <person name="Hamilton J.P."/>
            <person name="Kanamori H."/>
            <person name="McCombie W.R."/>
            <person name="Ouyang S."/>
            <person name="Schwartz D.C."/>
            <person name="Tanaka T."/>
            <person name="Wu J."/>
            <person name="Zhou S."/>
            <person name="Childs K.L."/>
            <person name="Davidson R.M."/>
            <person name="Lin H."/>
            <person name="Quesada-Ocampo L."/>
            <person name="Vaillancourt B."/>
            <person name="Sakai H."/>
            <person name="Lee S.S."/>
            <person name="Kim J."/>
            <person name="Numa H."/>
            <person name="Itoh T."/>
            <person name="Buell C.R."/>
            <person name="Matsumoto T."/>
        </authorList>
    </citation>
    <scope>GENOME REANNOTATION</scope>
    <source>
        <strain>cv. Nipponbare</strain>
    </source>
</reference>
<reference key="5">
    <citation type="journal article" date="2005" name="PLoS Biol.">
        <title>The genomes of Oryza sativa: a history of duplications.</title>
        <authorList>
            <person name="Yu J."/>
            <person name="Wang J."/>
            <person name="Lin W."/>
            <person name="Li S."/>
            <person name="Li H."/>
            <person name="Zhou J."/>
            <person name="Ni P."/>
            <person name="Dong W."/>
            <person name="Hu S."/>
            <person name="Zeng C."/>
            <person name="Zhang J."/>
            <person name="Zhang Y."/>
            <person name="Li R."/>
            <person name="Xu Z."/>
            <person name="Li S."/>
            <person name="Li X."/>
            <person name="Zheng H."/>
            <person name="Cong L."/>
            <person name="Lin L."/>
            <person name="Yin J."/>
            <person name="Geng J."/>
            <person name="Li G."/>
            <person name="Shi J."/>
            <person name="Liu J."/>
            <person name="Lv H."/>
            <person name="Li J."/>
            <person name="Wang J."/>
            <person name="Deng Y."/>
            <person name="Ran L."/>
            <person name="Shi X."/>
            <person name="Wang X."/>
            <person name="Wu Q."/>
            <person name="Li C."/>
            <person name="Ren X."/>
            <person name="Wang J."/>
            <person name="Wang X."/>
            <person name="Li D."/>
            <person name="Liu D."/>
            <person name="Zhang X."/>
            <person name="Ji Z."/>
            <person name="Zhao W."/>
            <person name="Sun Y."/>
            <person name="Zhang Z."/>
            <person name="Bao J."/>
            <person name="Han Y."/>
            <person name="Dong L."/>
            <person name="Ji J."/>
            <person name="Chen P."/>
            <person name="Wu S."/>
            <person name="Liu J."/>
            <person name="Xiao Y."/>
            <person name="Bu D."/>
            <person name="Tan J."/>
            <person name="Yang L."/>
            <person name="Ye C."/>
            <person name="Zhang J."/>
            <person name="Xu J."/>
            <person name="Zhou Y."/>
            <person name="Yu Y."/>
            <person name="Zhang B."/>
            <person name="Zhuang S."/>
            <person name="Wei H."/>
            <person name="Liu B."/>
            <person name="Lei M."/>
            <person name="Yu H."/>
            <person name="Li Y."/>
            <person name="Xu H."/>
            <person name="Wei S."/>
            <person name="He X."/>
            <person name="Fang L."/>
            <person name="Zhang Z."/>
            <person name="Zhang Y."/>
            <person name="Huang X."/>
            <person name="Su Z."/>
            <person name="Tong W."/>
            <person name="Li J."/>
            <person name="Tong Z."/>
            <person name="Li S."/>
            <person name="Ye J."/>
            <person name="Wang L."/>
            <person name="Fang L."/>
            <person name="Lei T."/>
            <person name="Chen C.-S."/>
            <person name="Chen H.-C."/>
            <person name="Xu Z."/>
            <person name="Li H."/>
            <person name="Huang H."/>
            <person name="Zhang F."/>
            <person name="Xu H."/>
            <person name="Li N."/>
            <person name="Zhao C."/>
            <person name="Li S."/>
            <person name="Dong L."/>
            <person name="Huang Y."/>
            <person name="Li L."/>
            <person name="Xi Y."/>
            <person name="Qi Q."/>
            <person name="Li W."/>
            <person name="Zhang B."/>
            <person name="Hu W."/>
            <person name="Zhang Y."/>
            <person name="Tian X."/>
            <person name="Jiao Y."/>
            <person name="Liang X."/>
            <person name="Jin J."/>
            <person name="Gao L."/>
            <person name="Zheng W."/>
            <person name="Hao B."/>
            <person name="Liu S.-M."/>
            <person name="Wang W."/>
            <person name="Yuan L."/>
            <person name="Cao M."/>
            <person name="McDermott J."/>
            <person name="Samudrala R."/>
            <person name="Wang J."/>
            <person name="Wong G.K.-S."/>
            <person name="Yang H."/>
        </authorList>
    </citation>
    <scope>NUCLEOTIDE SEQUENCE [LARGE SCALE GENOMIC DNA]</scope>
    <source>
        <strain>cv. Nipponbare</strain>
    </source>
</reference>
<reference key="6">
    <citation type="journal article" date="2003" name="Science">
        <title>Collection, mapping, and annotation of over 28,000 cDNA clones from japonica rice.</title>
        <authorList>
            <consortium name="The rice full-length cDNA consortium"/>
        </authorList>
    </citation>
    <scope>NUCLEOTIDE SEQUENCE [LARGE SCALE MRNA] (ISOFORMS 1 AND 2)</scope>
    <source>
        <strain>cv. Nipponbare</strain>
    </source>
</reference>
<reference key="7">
    <citation type="journal article" date="2009" name="J. Exp. Bot.">
        <title>Inducible antisense suppression of glycolate oxidase reveals its strong regulation over photosynthesis in rice.</title>
        <authorList>
            <person name="Xu H.-W."/>
            <person name="Zhang J."/>
            <person name="Zeng J."/>
            <person name="Jiang L."/>
            <person name="Liu E."/>
            <person name="Peng C."/>
            <person name="He Z.-H."/>
            <person name="Peng X.-X."/>
        </authorList>
    </citation>
    <scope>GENE FAMILY</scope>
    <scope>NOMENCLATURE</scope>
</reference>
<dbReference type="EC" id="1.1.3.15" evidence="1"/>
<dbReference type="EMBL" id="AL606645">
    <property type="protein sequence ID" value="CAE03500.2"/>
    <property type="molecule type" value="Genomic_DNA"/>
</dbReference>
<dbReference type="EMBL" id="AP008210">
    <property type="protein sequence ID" value="BAF15839.1"/>
    <property type="molecule type" value="Genomic_DNA"/>
</dbReference>
<dbReference type="EMBL" id="AP014960">
    <property type="protein sequence ID" value="BAS91083.1"/>
    <property type="molecule type" value="Genomic_DNA"/>
</dbReference>
<dbReference type="EMBL" id="AP014960">
    <property type="protein sequence ID" value="BAS91084.1"/>
    <property type="molecule type" value="Genomic_DNA"/>
</dbReference>
<dbReference type="EMBL" id="CM000141">
    <property type="protein sequence ID" value="EEE61716.1"/>
    <property type="molecule type" value="Genomic_DNA"/>
</dbReference>
<dbReference type="EMBL" id="AK060221">
    <property type="protein sequence ID" value="BAG87371.1"/>
    <property type="molecule type" value="mRNA"/>
</dbReference>
<dbReference type="EMBL" id="AK068638">
    <property type="protein sequence ID" value="BAG91005.1"/>
    <property type="molecule type" value="mRNA"/>
</dbReference>
<dbReference type="RefSeq" id="XP_015635502.1">
    <property type="nucleotide sequence ID" value="XM_015780016.1"/>
</dbReference>
<dbReference type="RefSeq" id="XP_015635503.1">
    <property type="nucleotide sequence ID" value="XM_015780017.1"/>
</dbReference>
<dbReference type="SMR" id="Q7FAS1"/>
<dbReference type="FunCoup" id="Q7FAS1">
    <property type="interactions" value="1011"/>
</dbReference>
<dbReference type="STRING" id="39947.Q7FAS1"/>
<dbReference type="PaxDb" id="39947-Q7FAS1"/>
<dbReference type="EnsemblPlants" id="Os04t0623500-02">
    <molecule id="Q7FAS1-1"/>
    <property type="protein sequence ID" value="Os04t0623500-02"/>
    <property type="gene ID" value="Os04g0623500"/>
</dbReference>
<dbReference type="Gramene" id="Os04t0623500-02">
    <molecule id="Q7FAS1-1"/>
    <property type="protein sequence ID" value="Os04t0623500-02"/>
    <property type="gene ID" value="Os04g0623500"/>
</dbReference>
<dbReference type="KEGG" id="dosa:Os04g0623500"/>
<dbReference type="eggNOG" id="KOG0538">
    <property type="taxonomic scope" value="Eukaryota"/>
</dbReference>
<dbReference type="HOGENOM" id="CLU_020639_0_0_1"/>
<dbReference type="InParanoid" id="Q7FAS1"/>
<dbReference type="OMA" id="WFQLYWL"/>
<dbReference type="OrthoDB" id="25826at2759"/>
<dbReference type="PlantReactome" id="R-OSA-1119312">
    <property type="pathway name" value="Photorespiration"/>
</dbReference>
<dbReference type="PlantReactome" id="R-OSA-1119596">
    <property type="pathway name" value="Glutamate biosynthesis I"/>
</dbReference>
<dbReference type="UniPathway" id="UPA00951">
    <property type="reaction ID" value="UER00912"/>
</dbReference>
<dbReference type="Proteomes" id="UP000000763">
    <property type="component" value="Chromosome 4"/>
</dbReference>
<dbReference type="Proteomes" id="UP000007752">
    <property type="component" value="Chromosome 4"/>
</dbReference>
<dbReference type="Proteomes" id="UP000059680">
    <property type="component" value="Chromosome 4"/>
</dbReference>
<dbReference type="GO" id="GO:0005777">
    <property type="term" value="C:peroxisome"/>
    <property type="evidence" value="ECO:0000250"/>
    <property type="project" value="UniProtKB"/>
</dbReference>
<dbReference type="GO" id="GO:0003973">
    <property type="term" value="F:(S)-2-hydroxy-acid oxidase activity"/>
    <property type="evidence" value="ECO:0000250"/>
    <property type="project" value="UniProtKB"/>
</dbReference>
<dbReference type="GO" id="GO:0010181">
    <property type="term" value="F:FMN binding"/>
    <property type="evidence" value="ECO:0007669"/>
    <property type="project" value="InterPro"/>
</dbReference>
<dbReference type="GO" id="GO:0009854">
    <property type="term" value="P:oxidative photosynthetic carbon pathway"/>
    <property type="evidence" value="ECO:0007669"/>
    <property type="project" value="UniProtKB-KW"/>
</dbReference>
<dbReference type="GO" id="GO:0009853">
    <property type="term" value="P:photorespiration"/>
    <property type="evidence" value="ECO:0000250"/>
    <property type="project" value="UniProtKB"/>
</dbReference>
<dbReference type="GO" id="GO:0010109">
    <property type="term" value="P:regulation of photosynthesis"/>
    <property type="evidence" value="ECO:0000250"/>
    <property type="project" value="UniProtKB"/>
</dbReference>
<dbReference type="GO" id="GO:0051707">
    <property type="term" value="P:response to other organism"/>
    <property type="evidence" value="ECO:0007669"/>
    <property type="project" value="UniProtKB-ARBA"/>
</dbReference>
<dbReference type="GO" id="GO:0046718">
    <property type="term" value="P:symbiont entry into host cell"/>
    <property type="evidence" value="ECO:0000250"/>
    <property type="project" value="UniProtKB"/>
</dbReference>
<dbReference type="CDD" id="cd02809">
    <property type="entry name" value="alpha_hydroxyacid_oxid_FMN"/>
    <property type="match status" value="1"/>
</dbReference>
<dbReference type="FunFam" id="3.20.20.70:FF:000063">
    <property type="entry name" value="peroxisomal (S)-2-hydroxy-acid oxidase GLO1"/>
    <property type="match status" value="1"/>
</dbReference>
<dbReference type="Gene3D" id="3.20.20.70">
    <property type="entry name" value="Aldolase class I"/>
    <property type="match status" value="1"/>
</dbReference>
<dbReference type="InterPro" id="IPR013785">
    <property type="entry name" value="Aldolase_TIM"/>
</dbReference>
<dbReference type="InterPro" id="IPR012133">
    <property type="entry name" value="Alpha-hydoxy_acid_DH_FMN"/>
</dbReference>
<dbReference type="InterPro" id="IPR000262">
    <property type="entry name" value="FMN-dep_DH"/>
</dbReference>
<dbReference type="InterPro" id="IPR037396">
    <property type="entry name" value="FMN_HAD"/>
</dbReference>
<dbReference type="InterPro" id="IPR008259">
    <property type="entry name" value="FMN_hydac_DH_AS"/>
</dbReference>
<dbReference type="PANTHER" id="PTHR10578:SF70">
    <property type="entry name" value="GLYCOLATE OXIDASE 3"/>
    <property type="match status" value="1"/>
</dbReference>
<dbReference type="PANTHER" id="PTHR10578">
    <property type="entry name" value="S -2-HYDROXY-ACID OXIDASE-RELATED"/>
    <property type="match status" value="1"/>
</dbReference>
<dbReference type="Pfam" id="PF01070">
    <property type="entry name" value="FMN_dh"/>
    <property type="match status" value="1"/>
</dbReference>
<dbReference type="PIRSF" id="PIRSF000138">
    <property type="entry name" value="Al-hdrx_acd_dh"/>
    <property type="match status" value="1"/>
</dbReference>
<dbReference type="SUPFAM" id="SSF51395">
    <property type="entry name" value="FMN-linked oxidoreductases"/>
    <property type="match status" value="1"/>
</dbReference>
<dbReference type="PROSITE" id="PS00557">
    <property type="entry name" value="FMN_HYDROXY_ACID_DH_1"/>
    <property type="match status" value="1"/>
</dbReference>
<dbReference type="PROSITE" id="PS51349">
    <property type="entry name" value="FMN_HYDROXY_ACID_DH_2"/>
    <property type="match status" value="1"/>
</dbReference>
<sequence length="367" mass="40533">MELITNVSEYEQLAKQKLPKMIYDYYASGAEDQWTLKENREAFSRILFRPRILIDVSRINMATNVLGFNISMPIMIAPSAMQKMAHPEGELATARAASAAGTIMTLSSWSTSSVEEVNSAAPGIRFFQLYVYKDRNIVRQLVRRAELAGFKAIALTVDTPRLGRREADIKNRFNLPPHLVLKNFEALDLGKMDKTNDSGLASYVASQVDRSLSWTDVKWLQTITSLPILVKGVMTAEDTRLAVESGAAGIIVSNHGARQLDYVPATISCLEEVVREAKGRLPVFLDGGVRRGTDVFKALALGASGVFIGRPVLFSLAVDGEAGVRKVLQMLRDELELTMALSGCTSLAEITRNHVITDSDRIRRSRL</sequence>
<gene>
    <name type="primary">GLO3</name>
    <name type="ordered locus">Os04g0623500</name>
    <name type="ordered locus">LOC_Os04g53210</name>
    <name type="ORF">OsJ_16217</name>
    <name type="ORF">OSJNBa0053K19.8</name>
</gene>
<comment type="function">
    <text evidence="1">Catalyzes the oxidation of glycolate to glyoxylate, with a reduction of O2 to H2O2. Is a key enzyme in photorespiration in green plants.</text>
</comment>
<comment type="catalytic activity">
    <reaction evidence="1">
        <text>glycolate + O2 = glyoxylate + H2O2</text>
        <dbReference type="Rhea" id="RHEA:25311"/>
        <dbReference type="ChEBI" id="CHEBI:15379"/>
        <dbReference type="ChEBI" id="CHEBI:16240"/>
        <dbReference type="ChEBI" id="CHEBI:29805"/>
        <dbReference type="ChEBI" id="CHEBI:36655"/>
        <dbReference type="EC" id="1.1.3.15"/>
    </reaction>
    <physiologicalReaction direction="left-to-right" evidence="1">
        <dbReference type="Rhea" id="RHEA:25312"/>
    </physiologicalReaction>
</comment>
<comment type="cofactor">
    <cofactor evidence="1">
        <name>FMN</name>
        <dbReference type="ChEBI" id="CHEBI:58210"/>
    </cofactor>
    <text evidence="1">Binds 1 FMN per subunit.</text>
</comment>
<comment type="pathway">
    <text evidence="1">Photosynthesis; photorespiration; glycine from 2-phosphoglycolate: step 2/3.</text>
</comment>
<comment type="subunit">
    <text evidence="1">Homotetramer.</text>
</comment>
<comment type="subcellular location">
    <subcellularLocation>
        <location evidence="1">Peroxisome</location>
    </subcellularLocation>
</comment>
<comment type="alternative products">
    <event type="alternative splicing"/>
    <isoform>
        <id>Q7FAS1-1</id>
        <name>1</name>
        <sequence type="displayed"/>
    </isoform>
    <isoform>
        <id>Q7FAS1-2</id>
        <name>2</name>
        <sequence type="described" ref="VSP_040390"/>
    </isoform>
</comment>
<comment type="similarity">
    <text evidence="4">Belongs to the FMN-dependent alpha-hydroxy acid dehydrogenase family.</text>
</comment>
<name>GLO3_ORYSJ</name>
<accession>Q7FAS1</accession>
<accession>A0A0P0WEZ5</accession>
<accession>B7E4S4</accession>
<feature type="chain" id="PRO_0000403413" description="Glycolate oxidase 3">
    <location>
        <begin position="1"/>
        <end position="367"/>
    </location>
</feature>
<feature type="domain" description="FMN hydroxy acid dehydrogenase" evidence="4">
    <location>
        <begin position="1"/>
        <end position="360"/>
    </location>
</feature>
<feature type="short sequence motif" description="Microbody targeting signal" evidence="3">
    <location>
        <begin position="365"/>
        <end position="367"/>
    </location>
</feature>
<feature type="active site" description="Proton acceptor" evidence="1">
    <location>
        <position position="255"/>
    </location>
</feature>
<feature type="binding site" evidence="2">
    <location>
        <position position="25"/>
    </location>
    <ligand>
        <name>glyoxylate</name>
        <dbReference type="ChEBI" id="CHEBI:36655"/>
    </ligand>
</feature>
<feature type="binding site" evidence="1">
    <location>
        <begin position="78"/>
        <end position="80"/>
    </location>
    <ligand>
        <name>FMN</name>
        <dbReference type="ChEBI" id="CHEBI:58210"/>
    </ligand>
</feature>
<feature type="binding site" evidence="1">
    <location>
        <position position="107"/>
    </location>
    <ligand>
        <name>FMN</name>
        <dbReference type="ChEBI" id="CHEBI:58210"/>
    </ligand>
</feature>
<feature type="binding site" evidence="1">
    <location>
        <begin position="128"/>
        <end position="130"/>
    </location>
    <ligand>
        <name>FMN</name>
        <dbReference type="ChEBI" id="CHEBI:58210"/>
    </ligand>
</feature>
<feature type="binding site" evidence="2">
    <location>
        <position position="130"/>
    </location>
    <ligand>
        <name>glyoxylate</name>
        <dbReference type="ChEBI" id="CHEBI:36655"/>
    </ligand>
</feature>
<feature type="binding site" evidence="1">
    <location>
        <position position="156"/>
    </location>
    <ligand>
        <name>FMN</name>
        <dbReference type="ChEBI" id="CHEBI:58210"/>
    </ligand>
</feature>
<feature type="binding site" evidence="2">
    <location>
        <position position="165"/>
    </location>
    <ligand>
        <name>glyoxylate</name>
        <dbReference type="ChEBI" id="CHEBI:36655"/>
    </ligand>
</feature>
<feature type="binding site" evidence="1">
    <location>
        <position position="231"/>
    </location>
    <ligand>
        <name>FMN</name>
        <dbReference type="ChEBI" id="CHEBI:58210"/>
    </ligand>
</feature>
<feature type="binding site" evidence="1">
    <location>
        <position position="253"/>
    </location>
    <ligand>
        <name>FMN</name>
        <dbReference type="ChEBI" id="CHEBI:58210"/>
    </ligand>
</feature>
<feature type="binding site" evidence="2">
    <location>
        <position position="255"/>
    </location>
    <ligand>
        <name>glyoxylate</name>
        <dbReference type="ChEBI" id="CHEBI:36655"/>
    </ligand>
</feature>
<feature type="binding site" evidence="2">
    <location>
        <position position="258"/>
    </location>
    <ligand>
        <name>glyoxylate</name>
        <dbReference type="ChEBI" id="CHEBI:36655"/>
    </ligand>
</feature>
<feature type="binding site" evidence="1">
    <location>
        <begin position="286"/>
        <end position="290"/>
    </location>
    <ligand>
        <name>FMN</name>
        <dbReference type="ChEBI" id="CHEBI:58210"/>
    </ligand>
</feature>
<feature type="binding site" evidence="1">
    <location>
        <begin position="309"/>
        <end position="310"/>
    </location>
    <ligand>
        <name>FMN</name>
        <dbReference type="ChEBI" id="CHEBI:58210"/>
    </ligand>
</feature>
<feature type="site" description="Involved in determining the substrate specificity of glycolate oxidase" evidence="1">
    <location>
        <position position="109"/>
    </location>
</feature>
<feature type="splice variant" id="VSP_040390" description="In isoform 2." evidence="5">
    <location>
        <begin position="306"/>
        <end position="307"/>
    </location>
</feature>
<proteinExistence type="evidence at transcript level"/>
<evidence type="ECO:0000250" key="1">
    <source>
        <dbReference type="UniProtKB" id="P05414"/>
    </source>
</evidence>
<evidence type="ECO:0000250" key="2">
    <source>
        <dbReference type="UniProtKB" id="Q9UJM8"/>
    </source>
</evidence>
<evidence type="ECO:0000255" key="3"/>
<evidence type="ECO:0000255" key="4">
    <source>
        <dbReference type="PROSITE-ProRule" id="PRU00683"/>
    </source>
</evidence>
<evidence type="ECO:0000303" key="5">
    <source>
    </source>
</evidence>
<organism>
    <name type="scientific">Oryza sativa subsp. japonica</name>
    <name type="common">Rice</name>
    <dbReference type="NCBI Taxonomy" id="39947"/>
    <lineage>
        <taxon>Eukaryota</taxon>
        <taxon>Viridiplantae</taxon>
        <taxon>Streptophyta</taxon>
        <taxon>Embryophyta</taxon>
        <taxon>Tracheophyta</taxon>
        <taxon>Spermatophyta</taxon>
        <taxon>Magnoliopsida</taxon>
        <taxon>Liliopsida</taxon>
        <taxon>Poales</taxon>
        <taxon>Poaceae</taxon>
        <taxon>BOP clade</taxon>
        <taxon>Oryzoideae</taxon>
        <taxon>Oryzeae</taxon>
        <taxon>Oryzinae</taxon>
        <taxon>Oryza</taxon>
        <taxon>Oryza sativa</taxon>
    </lineage>
</organism>
<protein>
    <recommendedName>
        <fullName>Glycolate oxidase 3</fullName>
        <shortName>GOX 3</shortName>
        <shortName>OsGLO3</shortName>
        <ecNumber evidence="1">1.1.3.15</ecNumber>
    </recommendedName>
    <alternativeName>
        <fullName>Peroxisomal (S)-2-hydroxy-acid oxidase GLO3</fullName>
    </alternativeName>
    <alternativeName>
        <fullName>Short chain alpha-hydroxy acid oxidase GLO3</fullName>
    </alternativeName>
</protein>
<keyword id="KW-0025">Alternative splicing</keyword>
<keyword id="KW-0285">Flavoprotein</keyword>
<keyword id="KW-0288">FMN</keyword>
<keyword id="KW-0323">Glycolate pathway</keyword>
<keyword id="KW-0560">Oxidoreductase</keyword>
<keyword id="KW-0576">Peroxisome</keyword>
<keyword id="KW-0601">Photorespiration</keyword>
<keyword id="KW-1185">Reference proteome</keyword>